<keyword id="KW-0028">Amino-acid biosynthesis</keyword>
<keyword id="KW-0057">Aromatic amino acid biosynthesis</keyword>
<keyword id="KW-0456">Lyase</keyword>
<keyword id="KW-0663">Pyridoxal phosphate</keyword>
<keyword id="KW-0822">Tryptophan biosynthesis</keyword>
<reference key="1">
    <citation type="journal article" date="2007" name="Nat. Biotechnol.">
        <title>Comparative analysis of the complete genome sequence of the plant growth-promoting bacterium Bacillus amyloliquefaciens FZB42.</title>
        <authorList>
            <person name="Chen X.H."/>
            <person name="Koumoutsi A."/>
            <person name="Scholz R."/>
            <person name="Eisenreich A."/>
            <person name="Schneider K."/>
            <person name="Heinemeyer I."/>
            <person name="Morgenstern B."/>
            <person name="Voss B."/>
            <person name="Hess W.R."/>
            <person name="Reva O."/>
            <person name="Junge H."/>
            <person name="Voigt B."/>
            <person name="Jungblut P.R."/>
            <person name="Vater J."/>
            <person name="Suessmuth R."/>
            <person name="Liesegang H."/>
            <person name="Strittmatter A."/>
            <person name="Gottschalk G."/>
            <person name="Borriss R."/>
        </authorList>
    </citation>
    <scope>NUCLEOTIDE SEQUENCE [LARGE SCALE GENOMIC DNA]</scope>
    <source>
        <strain>DSM 23117 / BGSC 10A6 / LMG 26770 / FZB42</strain>
    </source>
</reference>
<sequence length="400" mass="43579">MYPYPNEIGRYGEFGGKFVPETLMRPLEEIETAFKELKNDPVFHAEYKKLLFDYSGRPTALTFADRVSEYLGGAKIYLKREDLNHTGSHKINNALGQILLAKKMGKTKIIAETGAGQHGVAAATAAAKFGFKCTVFMGEEDVARQSLNVFRMKLLGAEVVPVTSGNGTLKDATNEAIRYWVQHCEDHFYLIGSVVGPHPYPYIVREFQKIIGEEAKEQLRRVEGTLPDKVVACVGGGSNAMGIFQAFLDEDTELIGAEAAGKGIDTPLHAATIAKGTLGVIHGSMTYLIQDQYGQIIEPYSISAGLDYPGIGPEHAYLHKSGRVTYESVTDDEAIAALRLLSETEGILPAIESAHALAKAFEMAKDMDKDKIILVSLSGRGDKDVHTLMNVLENGVGTHV</sequence>
<comment type="function">
    <text evidence="1">The beta subunit is responsible for the synthesis of L-tryptophan from indole and L-serine.</text>
</comment>
<comment type="catalytic activity">
    <reaction evidence="1">
        <text>(1S,2R)-1-C-(indol-3-yl)glycerol 3-phosphate + L-serine = D-glyceraldehyde 3-phosphate + L-tryptophan + H2O</text>
        <dbReference type="Rhea" id="RHEA:10532"/>
        <dbReference type="ChEBI" id="CHEBI:15377"/>
        <dbReference type="ChEBI" id="CHEBI:33384"/>
        <dbReference type="ChEBI" id="CHEBI:57912"/>
        <dbReference type="ChEBI" id="CHEBI:58866"/>
        <dbReference type="ChEBI" id="CHEBI:59776"/>
        <dbReference type="EC" id="4.2.1.20"/>
    </reaction>
</comment>
<comment type="cofactor">
    <cofactor evidence="1">
        <name>pyridoxal 5'-phosphate</name>
        <dbReference type="ChEBI" id="CHEBI:597326"/>
    </cofactor>
</comment>
<comment type="pathway">
    <text evidence="1">Amino-acid biosynthesis; L-tryptophan biosynthesis; L-tryptophan from chorismate: step 5/5.</text>
</comment>
<comment type="subunit">
    <text evidence="1">Tetramer of two alpha and two beta chains.</text>
</comment>
<comment type="similarity">
    <text evidence="1">Belongs to the TrpB family.</text>
</comment>
<evidence type="ECO:0000255" key="1">
    <source>
        <dbReference type="HAMAP-Rule" id="MF_00133"/>
    </source>
</evidence>
<gene>
    <name evidence="1" type="primary">trpB</name>
    <name type="ordered locus">RBAM_020800</name>
</gene>
<feature type="chain" id="PRO_1000018320" description="Tryptophan synthase beta chain">
    <location>
        <begin position="1"/>
        <end position="400"/>
    </location>
</feature>
<feature type="modified residue" description="N6-(pyridoxal phosphate)lysine" evidence="1">
    <location>
        <position position="90"/>
    </location>
</feature>
<organism>
    <name type="scientific">Bacillus velezensis (strain DSM 23117 / BGSC 10A6 / LMG 26770 / FZB42)</name>
    <name type="common">Bacillus amyloliquefaciens subsp. plantarum</name>
    <dbReference type="NCBI Taxonomy" id="326423"/>
    <lineage>
        <taxon>Bacteria</taxon>
        <taxon>Bacillati</taxon>
        <taxon>Bacillota</taxon>
        <taxon>Bacilli</taxon>
        <taxon>Bacillales</taxon>
        <taxon>Bacillaceae</taxon>
        <taxon>Bacillus</taxon>
        <taxon>Bacillus amyloliquefaciens group</taxon>
    </lineage>
</organism>
<proteinExistence type="inferred from homology"/>
<name>TRPB_BACVZ</name>
<protein>
    <recommendedName>
        <fullName evidence="1">Tryptophan synthase beta chain</fullName>
        <ecNumber evidence="1">4.2.1.20</ecNumber>
    </recommendedName>
</protein>
<accession>A7Z616</accession>
<dbReference type="EC" id="4.2.1.20" evidence="1"/>
<dbReference type="EMBL" id="CP000560">
    <property type="protein sequence ID" value="ABS74442.1"/>
    <property type="molecule type" value="Genomic_DNA"/>
</dbReference>
<dbReference type="RefSeq" id="WP_012117857.1">
    <property type="nucleotide sequence ID" value="NC_009725.2"/>
</dbReference>
<dbReference type="SMR" id="A7Z616"/>
<dbReference type="GeneID" id="93081215"/>
<dbReference type="KEGG" id="bay:RBAM_020800"/>
<dbReference type="HOGENOM" id="CLU_016734_3_1_9"/>
<dbReference type="UniPathway" id="UPA00035">
    <property type="reaction ID" value="UER00044"/>
</dbReference>
<dbReference type="Proteomes" id="UP000001120">
    <property type="component" value="Chromosome"/>
</dbReference>
<dbReference type="GO" id="GO:0005737">
    <property type="term" value="C:cytoplasm"/>
    <property type="evidence" value="ECO:0007669"/>
    <property type="project" value="TreeGrafter"/>
</dbReference>
<dbReference type="GO" id="GO:0004834">
    <property type="term" value="F:tryptophan synthase activity"/>
    <property type="evidence" value="ECO:0007669"/>
    <property type="project" value="UniProtKB-UniRule"/>
</dbReference>
<dbReference type="CDD" id="cd06446">
    <property type="entry name" value="Trp-synth_B"/>
    <property type="match status" value="1"/>
</dbReference>
<dbReference type="FunFam" id="3.40.50.1100:FF:000001">
    <property type="entry name" value="Tryptophan synthase beta chain"/>
    <property type="match status" value="1"/>
</dbReference>
<dbReference type="FunFam" id="3.40.50.1100:FF:000004">
    <property type="entry name" value="Tryptophan synthase beta chain"/>
    <property type="match status" value="1"/>
</dbReference>
<dbReference type="Gene3D" id="3.40.50.1100">
    <property type="match status" value="2"/>
</dbReference>
<dbReference type="HAMAP" id="MF_00133">
    <property type="entry name" value="Trp_synth_beta"/>
    <property type="match status" value="1"/>
</dbReference>
<dbReference type="InterPro" id="IPR006653">
    <property type="entry name" value="Trp_synth_b_CS"/>
</dbReference>
<dbReference type="InterPro" id="IPR006654">
    <property type="entry name" value="Trp_synth_beta"/>
</dbReference>
<dbReference type="InterPro" id="IPR023026">
    <property type="entry name" value="Trp_synth_beta/beta-like"/>
</dbReference>
<dbReference type="InterPro" id="IPR001926">
    <property type="entry name" value="TrpB-like_PALP"/>
</dbReference>
<dbReference type="InterPro" id="IPR036052">
    <property type="entry name" value="TrpB-like_PALP_sf"/>
</dbReference>
<dbReference type="NCBIfam" id="TIGR00263">
    <property type="entry name" value="trpB"/>
    <property type="match status" value="1"/>
</dbReference>
<dbReference type="PANTHER" id="PTHR48077:SF3">
    <property type="entry name" value="TRYPTOPHAN SYNTHASE"/>
    <property type="match status" value="1"/>
</dbReference>
<dbReference type="PANTHER" id="PTHR48077">
    <property type="entry name" value="TRYPTOPHAN SYNTHASE-RELATED"/>
    <property type="match status" value="1"/>
</dbReference>
<dbReference type="Pfam" id="PF00291">
    <property type="entry name" value="PALP"/>
    <property type="match status" value="1"/>
</dbReference>
<dbReference type="PIRSF" id="PIRSF001413">
    <property type="entry name" value="Trp_syn_beta"/>
    <property type="match status" value="1"/>
</dbReference>
<dbReference type="SUPFAM" id="SSF53686">
    <property type="entry name" value="Tryptophan synthase beta subunit-like PLP-dependent enzymes"/>
    <property type="match status" value="1"/>
</dbReference>
<dbReference type="PROSITE" id="PS00168">
    <property type="entry name" value="TRP_SYNTHASE_BETA"/>
    <property type="match status" value="1"/>
</dbReference>